<sequence length="328" mass="35923">MNRKKIIVAAVIVALLATLAYGWHYYRQQNDASLTLYGNVDIRTVNLGFRVAGRLASLAVDEGDDIHPGQTLGKLDDGPYLNALKQAQANVQSAQAQLALLKAGYREEEIAQVRSEVAQRQAAFDYADNFLKRQQGLWASKAVSANELENARTARNQAQANLQAAKDKLAQFLSGNRPQEIAQAEANLAQTEAELAQAQLNLQDTILLAPSAGTVLTRAVEPGTILSASNTVFTVSLTDPVWVRAYVSERHLGQAIPGSEVEVFTDGRPDKPYHGKIGFVSPTAEFTPKTVETPDLRTDLVYRLRIIITDADESLRQGMPVTVRFPQR</sequence>
<feature type="signal peptide" evidence="1">
    <location>
        <begin position="1"/>
        <end position="22"/>
    </location>
</feature>
<feature type="chain" id="PRO_0000088754" description="UPF0194 membrane protein YP_0975">
    <location>
        <begin position="23"/>
        <end position="328"/>
    </location>
</feature>
<feature type="coiled-coil region" evidence="1">
    <location>
        <begin position="80"/>
        <end position="112"/>
    </location>
</feature>
<feature type="coiled-coil region" evidence="1">
    <location>
        <begin position="139"/>
        <end position="212"/>
    </location>
</feature>
<feature type="sequence conflict" description="In Ref. 1; AAL27384." evidence="2" ref="1">
    <original>Q</original>
    <variation>R</variation>
    <location>
        <position position="159"/>
    </location>
</feature>
<evidence type="ECO:0000255" key="1"/>
<evidence type="ECO:0000305" key="2"/>
<gene>
    <name type="ordered locus">YP_0975</name>
</gene>
<dbReference type="EMBL" id="AF426171">
    <property type="protein sequence ID" value="AAL27384.1"/>
    <property type="molecule type" value="Genomic_DNA"/>
</dbReference>
<dbReference type="EMBL" id="AE017042">
    <property type="protein sequence ID" value="AAS61227.1"/>
    <property type="molecule type" value="Genomic_DNA"/>
</dbReference>
<dbReference type="SMR" id="Q93AA7"/>
<dbReference type="EnsemblBacteria" id="AAS61227">
    <property type="protein sequence ID" value="AAS61227"/>
    <property type="gene ID" value="YP_0975"/>
</dbReference>
<dbReference type="KEGG" id="ypj:CH55_3945"/>
<dbReference type="KEGG" id="ypm:YP_0975"/>
<dbReference type="HOGENOM" id="CLU_018816_6_3_6"/>
<dbReference type="OMA" id="VWIRAYI"/>
<dbReference type="Proteomes" id="UP000001019">
    <property type="component" value="Chromosome"/>
</dbReference>
<dbReference type="GO" id="GO:0042597">
    <property type="term" value="C:periplasmic space"/>
    <property type="evidence" value="ECO:0007669"/>
    <property type="project" value="UniProtKB-SubCell"/>
</dbReference>
<dbReference type="Gene3D" id="2.40.30.170">
    <property type="match status" value="1"/>
</dbReference>
<dbReference type="Gene3D" id="2.40.50.100">
    <property type="match status" value="1"/>
</dbReference>
<dbReference type="Gene3D" id="1.10.287.470">
    <property type="entry name" value="Helix hairpin bin"/>
    <property type="match status" value="2"/>
</dbReference>
<dbReference type="HAMAP" id="MF_01304">
    <property type="entry name" value="UPF0194"/>
    <property type="match status" value="1"/>
</dbReference>
<dbReference type="InterPro" id="IPR032317">
    <property type="entry name" value="CusB_D23"/>
</dbReference>
<dbReference type="InterPro" id="IPR022936">
    <property type="entry name" value="UPF0194_membrane_YbhG"/>
</dbReference>
<dbReference type="InterPro" id="IPR050465">
    <property type="entry name" value="UPF0194_transport"/>
</dbReference>
<dbReference type="NCBIfam" id="NF002939">
    <property type="entry name" value="PRK03598.1"/>
    <property type="match status" value="1"/>
</dbReference>
<dbReference type="PANTHER" id="PTHR32347">
    <property type="entry name" value="EFFLUX SYSTEM COMPONENT YKNX-RELATED"/>
    <property type="match status" value="1"/>
</dbReference>
<dbReference type="PANTHER" id="PTHR32347:SF29">
    <property type="entry name" value="UPF0194 MEMBRANE PROTEIN YBHG"/>
    <property type="match status" value="1"/>
</dbReference>
<dbReference type="Pfam" id="PF16576">
    <property type="entry name" value="HlyD_D23"/>
    <property type="match status" value="1"/>
</dbReference>
<dbReference type="SUPFAM" id="SSF111369">
    <property type="entry name" value="HlyD-like secretion proteins"/>
    <property type="match status" value="2"/>
</dbReference>
<proteinExistence type="inferred from homology"/>
<organism>
    <name type="scientific">Yersinia pestis</name>
    <dbReference type="NCBI Taxonomy" id="632"/>
    <lineage>
        <taxon>Bacteria</taxon>
        <taxon>Pseudomonadati</taxon>
        <taxon>Pseudomonadota</taxon>
        <taxon>Gammaproteobacteria</taxon>
        <taxon>Enterobacterales</taxon>
        <taxon>Yersiniaceae</taxon>
        <taxon>Yersinia</taxon>
    </lineage>
</organism>
<name>YBHG_YERPE</name>
<keyword id="KW-0175">Coiled coil</keyword>
<keyword id="KW-0574">Periplasm</keyword>
<keyword id="KW-0732">Signal</keyword>
<reference key="1">
    <citation type="journal article" date="2002" name="Microbiology">
        <title>Genome plasticity in Yersinia pestis.</title>
        <authorList>
            <person name="Radnedge L."/>
            <person name="Agron P.G."/>
            <person name="Worsham P.L."/>
            <person name="Andersen G.L."/>
        </authorList>
    </citation>
    <scope>NUCLEOTIDE SEQUENCE [GENOMIC DNA]</scope>
    <source>
        <strain>Yokohama / Biovar Antiqua</strain>
    </source>
</reference>
<reference key="2">
    <citation type="journal article" date="2004" name="DNA Res.">
        <title>Complete genome sequence of Yersinia pestis strain 91001, an isolate avirulent to humans.</title>
        <authorList>
            <person name="Song Y."/>
            <person name="Tong Z."/>
            <person name="Wang J."/>
            <person name="Wang L."/>
            <person name="Guo Z."/>
            <person name="Han Y."/>
            <person name="Zhang J."/>
            <person name="Pei D."/>
            <person name="Zhou D."/>
            <person name="Qin H."/>
            <person name="Pang X."/>
            <person name="Han Y."/>
            <person name="Zhai J."/>
            <person name="Li M."/>
            <person name="Cui B."/>
            <person name="Qi Z."/>
            <person name="Jin L."/>
            <person name="Dai R."/>
            <person name="Chen F."/>
            <person name="Li S."/>
            <person name="Ye C."/>
            <person name="Du Z."/>
            <person name="Lin W."/>
            <person name="Wang J."/>
            <person name="Yu J."/>
            <person name="Yang H."/>
            <person name="Wang J."/>
            <person name="Huang P."/>
            <person name="Yang R."/>
        </authorList>
    </citation>
    <scope>NUCLEOTIDE SEQUENCE [LARGE SCALE GENOMIC DNA]</scope>
    <source>
        <strain>91001 / Biovar Mediaevalis</strain>
    </source>
</reference>
<accession>Q93AA7</accession>
<protein>
    <recommendedName>
        <fullName>UPF0194 membrane protein YP_0975</fullName>
    </recommendedName>
</protein>
<comment type="subcellular location">
    <subcellularLocation>
        <location evidence="2">Periplasm</location>
    </subcellularLocation>
</comment>
<comment type="similarity">
    <text evidence="2">Belongs to the UPF0194 family.</text>
</comment>